<proteinExistence type="inferred from homology"/>
<feature type="chain" id="PRO_0000228073" description="Mitochondrial import inner membrane translocase subunit TIM13">
    <location>
        <begin position="1"/>
        <end position="99"/>
    </location>
</feature>
<feature type="region of interest" description="Disordered" evidence="2">
    <location>
        <begin position="1"/>
        <end position="24"/>
    </location>
</feature>
<feature type="short sequence motif" description="Twin CX3C motif">
    <location>
        <begin position="47"/>
        <end position="70"/>
    </location>
</feature>
<feature type="compositionally biased region" description="Low complexity" evidence="2">
    <location>
        <begin position="1"/>
        <end position="13"/>
    </location>
</feature>
<feature type="disulfide bond" evidence="1">
    <location>
        <begin position="47"/>
        <end position="70"/>
    </location>
</feature>
<feature type="disulfide bond" evidence="1">
    <location>
        <begin position="51"/>
        <end position="66"/>
    </location>
</feature>
<reference key="1">
    <citation type="journal article" date="2005" name="Science">
        <title>The genome of the basidiomycetous yeast and human pathogen Cryptococcus neoformans.</title>
        <authorList>
            <person name="Loftus B.J."/>
            <person name="Fung E."/>
            <person name="Roncaglia P."/>
            <person name="Rowley D."/>
            <person name="Amedeo P."/>
            <person name="Bruno D."/>
            <person name="Vamathevan J."/>
            <person name="Miranda M."/>
            <person name="Anderson I.J."/>
            <person name="Fraser J.A."/>
            <person name="Allen J.E."/>
            <person name="Bosdet I.E."/>
            <person name="Brent M.R."/>
            <person name="Chiu R."/>
            <person name="Doering T.L."/>
            <person name="Donlin M.J."/>
            <person name="D'Souza C.A."/>
            <person name="Fox D.S."/>
            <person name="Grinberg V."/>
            <person name="Fu J."/>
            <person name="Fukushima M."/>
            <person name="Haas B.J."/>
            <person name="Huang J.C."/>
            <person name="Janbon G."/>
            <person name="Jones S.J.M."/>
            <person name="Koo H.L."/>
            <person name="Krzywinski M.I."/>
            <person name="Kwon-Chung K.J."/>
            <person name="Lengeler K.B."/>
            <person name="Maiti R."/>
            <person name="Marra M.A."/>
            <person name="Marra R.E."/>
            <person name="Mathewson C.A."/>
            <person name="Mitchell T.G."/>
            <person name="Pertea M."/>
            <person name="Riggs F.R."/>
            <person name="Salzberg S.L."/>
            <person name="Schein J.E."/>
            <person name="Shvartsbeyn A."/>
            <person name="Shin H."/>
            <person name="Shumway M."/>
            <person name="Specht C.A."/>
            <person name="Suh B.B."/>
            <person name="Tenney A."/>
            <person name="Utterback T.R."/>
            <person name="Wickes B.L."/>
            <person name="Wortman J.R."/>
            <person name="Wye N.H."/>
            <person name="Kronstad J.W."/>
            <person name="Lodge J.K."/>
            <person name="Heitman J."/>
            <person name="Davis R.W."/>
            <person name="Fraser C.M."/>
            <person name="Hyman R.W."/>
        </authorList>
    </citation>
    <scope>NUCLEOTIDE SEQUENCE [LARGE SCALE GENOMIC DNA]</scope>
    <source>
        <strain>JEC21 / ATCC MYA-565</strain>
    </source>
</reference>
<accession>P0CS00</accession>
<accession>Q55PL2</accession>
<accession>Q5KDU4</accession>
<protein>
    <recommendedName>
        <fullName>Mitochondrial import inner membrane translocase subunit TIM13</fullName>
    </recommendedName>
</protein>
<keyword id="KW-0143">Chaperone</keyword>
<keyword id="KW-1015">Disulfide bond</keyword>
<keyword id="KW-0472">Membrane</keyword>
<keyword id="KW-0479">Metal-binding</keyword>
<keyword id="KW-0496">Mitochondrion</keyword>
<keyword id="KW-0999">Mitochondrion inner membrane</keyword>
<keyword id="KW-0653">Protein transport</keyword>
<keyword id="KW-1185">Reference proteome</keyword>
<keyword id="KW-0811">Translocation</keyword>
<keyword id="KW-0813">Transport</keyword>
<keyword id="KW-0862">Zinc</keyword>
<evidence type="ECO:0000250" key="1"/>
<evidence type="ECO:0000256" key="2">
    <source>
        <dbReference type="SAM" id="MobiDB-lite"/>
    </source>
</evidence>
<evidence type="ECO:0000305" key="3"/>
<name>TIM13_CRYNJ</name>
<gene>
    <name type="primary">TIM13</name>
    <name type="ordered locus">CNG02760</name>
</gene>
<sequence length="99" mass="10721">MSSFFGSGAGSPSNDMTARKEQMKQSIQQELAIANAQQLINKINENCFAKCVTKPSTSLSSSQESCLSQCMTLYMAAFDQVSRSYVARISKERGVAPGL</sequence>
<comment type="function">
    <text evidence="1">Mitochondrial intermembrane chaperone that participates in the import and insertion of some multi-pass transmembrane proteins into the mitochondrial inner membrane. Also required for the transfer of beta-barrel precursors from the TOM complex to the sorting and assembly machinery (SAM complex) of the outer membrane. Acts as a chaperone-like protein that protects the hydrophobic precursors from aggregation and guide them through the mitochondrial intermembrane space. The TIM8-TIM13 complex is non essential and only mediates the import of few proteins, while the predominant TIM9-TIM10 70 kDa complex is crucial and mediates the import of much more proteins (By similarity).</text>
</comment>
<comment type="subunit">
    <text evidence="1">Heterohexamer; composed of 3 copies of TIM8 and 3 copies of TIM13, named soluble 70 kDa complex. Associates with the TIM22 complex, whose core is composed of TIM22 and TIM54. Interacts with the transmembrane regions of multi-pass transmembrane proteins in transit (By similarity).</text>
</comment>
<comment type="subcellular location">
    <subcellularLocation>
        <location evidence="1">Mitochondrion inner membrane</location>
        <topology evidence="1">Peripheral membrane protein</topology>
        <orientation evidence="1">Intermembrane side</orientation>
    </subcellularLocation>
</comment>
<comment type="domain">
    <text evidence="1">The twin CX3C motif contains 4 conserved Cys residues that form 2 disulfide bonds in the mitochondrial intermembrane space. However, during the transit of TIM13 from cytoplasm into mitochondrion, the Cys residues probably coordinate zinc, thereby preventing folding and allowing its transfer across mitochondrial outer membrane (By similarity).</text>
</comment>
<comment type="similarity">
    <text evidence="3">Belongs to the small Tim family.</text>
</comment>
<organism>
    <name type="scientific">Cryptococcus neoformans var. neoformans serotype D (strain JEC21 / ATCC MYA-565)</name>
    <name type="common">Filobasidiella neoformans</name>
    <dbReference type="NCBI Taxonomy" id="214684"/>
    <lineage>
        <taxon>Eukaryota</taxon>
        <taxon>Fungi</taxon>
        <taxon>Dikarya</taxon>
        <taxon>Basidiomycota</taxon>
        <taxon>Agaricomycotina</taxon>
        <taxon>Tremellomycetes</taxon>
        <taxon>Tremellales</taxon>
        <taxon>Cryptococcaceae</taxon>
        <taxon>Cryptococcus</taxon>
        <taxon>Cryptococcus neoformans species complex</taxon>
    </lineage>
</organism>
<dbReference type="EMBL" id="AE017347">
    <property type="protein sequence ID" value="AAW44632.1"/>
    <property type="molecule type" value="Genomic_DNA"/>
</dbReference>
<dbReference type="RefSeq" id="XP_571939.1">
    <property type="nucleotide sequence ID" value="XM_571939.1"/>
</dbReference>
<dbReference type="SMR" id="P0CS00"/>
<dbReference type="FunCoup" id="P0CS00">
    <property type="interactions" value="263"/>
</dbReference>
<dbReference type="STRING" id="214684.P0CS00"/>
<dbReference type="PaxDb" id="214684-P0CS00"/>
<dbReference type="EnsemblFungi" id="AAW44632">
    <property type="protein sequence ID" value="AAW44632"/>
    <property type="gene ID" value="CNG02760"/>
</dbReference>
<dbReference type="GeneID" id="3258645"/>
<dbReference type="KEGG" id="cne:CNG02760"/>
<dbReference type="VEuPathDB" id="FungiDB:CNG02760"/>
<dbReference type="eggNOG" id="KOG1733">
    <property type="taxonomic scope" value="Eukaryota"/>
</dbReference>
<dbReference type="HOGENOM" id="CLU_141397_0_1_1"/>
<dbReference type="InParanoid" id="P0CS00"/>
<dbReference type="OMA" id="MAAWNQV"/>
<dbReference type="OrthoDB" id="7813104at2759"/>
<dbReference type="Proteomes" id="UP000002149">
    <property type="component" value="Chromosome 7"/>
</dbReference>
<dbReference type="GO" id="GO:0005743">
    <property type="term" value="C:mitochondrial inner membrane"/>
    <property type="evidence" value="ECO:0007669"/>
    <property type="project" value="UniProtKB-SubCell"/>
</dbReference>
<dbReference type="GO" id="GO:0042719">
    <property type="term" value="C:mitochondrial intermembrane space protein transporter complex"/>
    <property type="evidence" value="ECO:0000318"/>
    <property type="project" value="GO_Central"/>
</dbReference>
<dbReference type="GO" id="GO:0046872">
    <property type="term" value="F:metal ion binding"/>
    <property type="evidence" value="ECO:0007669"/>
    <property type="project" value="UniProtKB-KW"/>
</dbReference>
<dbReference type="GO" id="GO:0140318">
    <property type="term" value="F:protein transporter activity"/>
    <property type="evidence" value="ECO:0007669"/>
    <property type="project" value="EnsemblFungi"/>
</dbReference>
<dbReference type="GO" id="GO:0045039">
    <property type="term" value="P:protein insertion into mitochondrial inner membrane"/>
    <property type="evidence" value="ECO:0000318"/>
    <property type="project" value="GO_Central"/>
</dbReference>
<dbReference type="FunFam" id="1.10.287.810:FF:000001">
    <property type="entry name" value="mitochondrial import inner membrane translocase subunit TIM13"/>
    <property type="match status" value="1"/>
</dbReference>
<dbReference type="Gene3D" id="1.10.287.810">
    <property type="entry name" value="Mitochondrial import inner membrane translocase subunit tim13 like domains"/>
    <property type="match status" value="1"/>
</dbReference>
<dbReference type="InterPro" id="IPR004217">
    <property type="entry name" value="Tim10-like"/>
</dbReference>
<dbReference type="InterPro" id="IPR035427">
    <property type="entry name" value="Tim10-like_dom_sf"/>
</dbReference>
<dbReference type="Pfam" id="PF02953">
    <property type="entry name" value="zf-Tim10_DDP"/>
    <property type="match status" value="1"/>
</dbReference>
<dbReference type="SUPFAM" id="SSF144122">
    <property type="entry name" value="Tim10-like"/>
    <property type="match status" value="1"/>
</dbReference>